<evidence type="ECO:0000250" key="1">
    <source>
        <dbReference type="UniProtKB" id="Q39083"/>
    </source>
</evidence>
<evidence type="ECO:0000269" key="2">
    <source>
    </source>
</evidence>
<evidence type="ECO:0000305" key="3"/>
<protein>
    <recommendedName>
        <fullName>Protein DEHYDRATION-INDUCED 19 homolog 3</fullName>
        <shortName>AtDi19-3</shortName>
    </recommendedName>
</protein>
<comment type="subcellular location">
    <subcellularLocation>
        <location evidence="2">Nucleus</location>
    </subcellularLocation>
</comment>
<comment type="tissue specificity">
    <text evidence="2">Expressed in seedlings, roots, leaves, stems, flowers and siliques.</text>
</comment>
<comment type="induction">
    <text evidence="2">By drought stress, but not by abscisic acid.</text>
</comment>
<comment type="PTM">
    <text evidence="2">Phosphorylated in vitro by CPK3 or CPK11.</text>
</comment>
<comment type="similarity">
    <text evidence="3">Belongs to the Di19 family.</text>
</comment>
<comment type="sequence caution" evidence="3">
    <conflict type="erroneous gene model prediction">
        <sequence resource="EMBL-CDS" id="AAF26127"/>
    </conflict>
</comment>
<organism>
    <name type="scientific">Arabidopsis thaliana</name>
    <name type="common">Mouse-ear cress</name>
    <dbReference type="NCBI Taxonomy" id="3702"/>
    <lineage>
        <taxon>Eukaryota</taxon>
        <taxon>Viridiplantae</taxon>
        <taxon>Streptophyta</taxon>
        <taxon>Embryophyta</taxon>
        <taxon>Tracheophyta</taxon>
        <taxon>Spermatophyta</taxon>
        <taxon>Magnoliopsida</taxon>
        <taxon>eudicotyledons</taxon>
        <taxon>Gunneridae</taxon>
        <taxon>Pentapetalae</taxon>
        <taxon>rosids</taxon>
        <taxon>malvids</taxon>
        <taxon>Brassicales</taxon>
        <taxon>Brassicaceae</taxon>
        <taxon>Camelineae</taxon>
        <taxon>Arabidopsis</taxon>
    </lineage>
</organism>
<keyword id="KW-0539">Nucleus</keyword>
<keyword id="KW-0597">Phosphoprotein</keyword>
<keyword id="KW-1185">Reference proteome</keyword>
<sequence>MDSDSWSDRLASATRRYQLAFPSRSDTFLGFEEIDGEEEFREEFACPFCSDYFDIVSLCCHIDEDHPMEAKNGVCPVCAVRVGVDMVAHITLQHANIFKMHRKRKPRRGGSYSTLSILRREFPDGNFQSLFGGSSCIVSSSSSSNVAADPLLSSFISPIADGFFTTESCISAETGPVKKTTIQCLPEQNAKKTSLSAEDHKQKLKRSEFVRELLSSTILDDSL</sequence>
<feature type="chain" id="PRO_0000304415" description="Protein DEHYDRATION-INDUCED 19 homolog 3">
    <location>
        <begin position="1"/>
        <end position="223"/>
    </location>
</feature>
<feature type="modified residue" description="Phosphothreonine" evidence="1">
    <location>
        <position position="114"/>
    </location>
</feature>
<feature type="modified residue" description="Phosphoserine" evidence="1">
    <location>
        <position position="116"/>
    </location>
</feature>
<reference key="1">
    <citation type="journal article" date="2000" name="Nature">
        <title>Sequence and analysis of chromosome 3 of the plant Arabidopsis thaliana.</title>
        <authorList>
            <person name="Salanoubat M."/>
            <person name="Lemcke K."/>
            <person name="Rieger M."/>
            <person name="Ansorge W."/>
            <person name="Unseld M."/>
            <person name="Fartmann B."/>
            <person name="Valle G."/>
            <person name="Bloecker H."/>
            <person name="Perez-Alonso M."/>
            <person name="Obermaier B."/>
            <person name="Delseny M."/>
            <person name="Boutry M."/>
            <person name="Grivell L.A."/>
            <person name="Mache R."/>
            <person name="Puigdomenech P."/>
            <person name="De Simone V."/>
            <person name="Choisne N."/>
            <person name="Artiguenave F."/>
            <person name="Robert C."/>
            <person name="Brottier P."/>
            <person name="Wincker P."/>
            <person name="Cattolico L."/>
            <person name="Weissenbach J."/>
            <person name="Saurin W."/>
            <person name="Quetier F."/>
            <person name="Schaefer M."/>
            <person name="Mueller-Auer S."/>
            <person name="Gabel C."/>
            <person name="Fuchs M."/>
            <person name="Benes V."/>
            <person name="Wurmbach E."/>
            <person name="Drzonek H."/>
            <person name="Erfle H."/>
            <person name="Jordan N."/>
            <person name="Bangert S."/>
            <person name="Wiedelmann R."/>
            <person name="Kranz H."/>
            <person name="Voss H."/>
            <person name="Holland R."/>
            <person name="Brandt P."/>
            <person name="Nyakatura G."/>
            <person name="Vezzi A."/>
            <person name="D'Angelo M."/>
            <person name="Pallavicini A."/>
            <person name="Toppo S."/>
            <person name="Simionati B."/>
            <person name="Conrad A."/>
            <person name="Hornischer K."/>
            <person name="Kauer G."/>
            <person name="Loehnert T.-H."/>
            <person name="Nordsiek G."/>
            <person name="Reichelt J."/>
            <person name="Scharfe M."/>
            <person name="Schoen O."/>
            <person name="Bargues M."/>
            <person name="Terol J."/>
            <person name="Climent J."/>
            <person name="Navarro P."/>
            <person name="Collado C."/>
            <person name="Perez-Perez A."/>
            <person name="Ottenwaelder B."/>
            <person name="Duchemin D."/>
            <person name="Cooke R."/>
            <person name="Laudie M."/>
            <person name="Berger-Llauro C."/>
            <person name="Purnelle B."/>
            <person name="Masuy D."/>
            <person name="de Haan M."/>
            <person name="Maarse A.C."/>
            <person name="Alcaraz J.-P."/>
            <person name="Cottet A."/>
            <person name="Casacuberta E."/>
            <person name="Monfort A."/>
            <person name="Argiriou A."/>
            <person name="Flores M."/>
            <person name="Liguori R."/>
            <person name="Vitale D."/>
            <person name="Mannhaupt G."/>
            <person name="Haase D."/>
            <person name="Schoof H."/>
            <person name="Rudd S."/>
            <person name="Zaccaria P."/>
            <person name="Mewes H.-W."/>
            <person name="Mayer K.F.X."/>
            <person name="Kaul S."/>
            <person name="Town C.D."/>
            <person name="Koo H.L."/>
            <person name="Tallon L.J."/>
            <person name="Jenkins J."/>
            <person name="Rooney T."/>
            <person name="Rizzo M."/>
            <person name="Walts A."/>
            <person name="Utterback T."/>
            <person name="Fujii C.Y."/>
            <person name="Shea T.P."/>
            <person name="Creasy T.H."/>
            <person name="Haas B."/>
            <person name="Maiti R."/>
            <person name="Wu D."/>
            <person name="Peterson J."/>
            <person name="Van Aken S."/>
            <person name="Pai G."/>
            <person name="Militscher J."/>
            <person name="Sellers P."/>
            <person name="Gill J.E."/>
            <person name="Feldblyum T.V."/>
            <person name="Preuss D."/>
            <person name="Lin X."/>
            <person name="Nierman W.C."/>
            <person name="Salzberg S.L."/>
            <person name="White O."/>
            <person name="Venter J.C."/>
            <person name="Fraser C.M."/>
            <person name="Kaneko T."/>
            <person name="Nakamura Y."/>
            <person name="Sato S."/>
            <person name="Kato T."/>
            <person name="Asamizu E."/>
            <person name="Sasamoto S."/>
            <person name="Kimura T."/>
            <person name="Idesawa K."/>
            <person name="Kawashima K."/>
            <person name="Kishida Y."/>
            <person name="Kiyokawa C."/>
            <person name="Kohara M."/>
            <person name="Matsumoto M."/>
            <person name="Matsuno A."/>
            <person name="Muraki A."/>
            <person name="Nakayama S."/>
            <person name="Nakazaki N."/>
            <person name="Shinpo S."/>
            <person name="Takeuchi C."/>
            <person name="Wada T."/>
            <person name="Watanabe A."/>
            <person name="Yamada M."/>
            <person name="Yasuda M."/>
            <person name="Tabata S."/>
        </authorList>
    </citation>
    <scope>NUCLEOTIDE SEQUENCE [LARGE SCALE GENOMIC DNA]</scope>
    <source>
        <strain>cv. Columbia</strain>
    </source>
</reference>
<reference key="2">
    <citation type="journal article" date="2017" name="Plant J.">
        <title>Araport11: a complete reannotation of the Arabidopsis thaliana reference genome.</title>
        <authorList>
            <person name="Cheng C.Y."/>
            <person name="Krishnakumar V."/>
            <person name="Chan A.P."/>
            <person name="Thibaud-Nissen F."/>
            <person name="Schobel S."/>
            <person name="Town C.D."/>
        </authorList>
    </citation>
    <scope>GENOME REANNOTATION</scope>
    <source>
        <strain>cv. Columbia</strain>
    </source>
</reference>
<reference key="3">
    <citation type="journal article" date="2003" name="Science">
        <title>Empirical analysis of transcriptional activity in the Arabidopsis genome.</title>
        <authorList>
            <person name="Yamada K."/>
            <person name="Lim J."/>
            <person name="Dale J.M."/>
            <person name="Chen H."/>
            <person name="Shinn P."/>
            <person name="Palm C.J."/>
            <person name="Southwick A.M."/>
            <person name="Wu H.C."/>
            <person name="Kim C.J."/>
            <person name="Nguyen M."/>
            <person name="Pham P.K."/>
            <person name="Cheuk R.F."/>
            <person name="Karlin-Newmann G."/>
            <person name="Liu S.X."/>
            <person name="Lam B."/>
            <person name="Sakano H."/>
            <person name="Wu T."/>
            <person name="Yu G."/>
            <person name="Miranda M."/>
            <person name="Quach H.L."/>
            <person name="Tripp M."/>
            <person name="Chang C.H."/>
            <person name="Lee J.M."/>
            <person name="Toriumi M.J."/>
            <person name="Chan M.M."/>
            <person name="Tang C.C."/>
            <person name="Onodera C.S."/>
            <person name="Deng J.M."/>
            <person name="Akiyama K."/>
            <person name="Ansari Y."/>
            <person name="Arakawa T."/>
            <person name="Banh J."/>
            <person name="Banno F."/>
            <person name="Bowser L."/>
            <person name="Brooks S.Y."/>
            <person name="Carninci P."/>
            <person name="Chao Q."/>
            <person name="Choy N."/>
            <person name="Enju A."/>
            <person name="Goldsmith A.D."/>
            <person name="Gurjal M."/>
            <person name="Hansen N.F."/>
            <person name="Hayashizaki Y."/>
            <person name="Johnson-Hopson C."/>
            <person name="Hsuan V.W."/>
            <person name="Iida K."/>
            <person name="Karnes M."/>
            <person name="Khan S."/>
            <person name="Koesema E."/>
            <person name="Ishida J."/>
            <person name="Jiang P.X."/>
            <person name="Jones T."/>
            <person name="Kawai J."/>
            <person name="Kamiya A."/>
            <person name="Meyers C."/>
            <person name="Nakajima M."/>
            <person name="Narusaka M."/>
            <person name="Seki M."/>
            <person name="Sakurai T."/>
            <person name="Satou M."/>
            <person name="Tamse R."/>
            <person name="Vaysberg M."/>
            <person name="Wallender E.K."/>
            <person name="Wong C."/>
            <person name="Yamamura Y."/>
            <person name="Yuan S."/>
            <person name="Shinozaki K."/>
            <person name="Davis R.W."/>
            <person name="Theologis A."/>
            <person name="Ecker J.R."/>
        </authorList>
    </citation>
    <scope>NUCLEOTIDE SEQUENCE [LARGE SCALE MRNA]</scope>
    <source>
        <strain>cv. Columbia</strain>
    </source>
</reference>
<reference key="4">
    <citation type="journal article" date="2006" name="Plant Mol. Biol.">
        <title>The Arabidopsis AtDi19 gene family encodes a novel type of Cys2/His2 zinc-finger protein implicated in ABA-independent dehydration, high-salinity stress and light signaling pathways.</title>
        <authorList>
            <person name="Rodriguez Milla M.A."/>
            <person name="Townsend J."/>
            <person name="Chang I.-F."/>
            <person name="Cushman J.C."/>
        </authorList>
    </citation>
    <scope>SUBCELLULAR LOCATION</scope>
    <scope>TISSUE SPECIFICITY</scope>
    <scope>PHOSPHORYLATION</scope>
    <scope>INDUCTION BY DROUGHT</scope>
    <scope>GENE FAMILY</scope>
    <scope>NOMENCLATURE</scope>
</reference>
<gene>
    <name type="primary">DI19-3</name>
    <name type="ordered locus">At3g05700</name>
    <name type="ORF">F18C1.3</name>
</gene>
<name>DI193_ARATH</name>
<dbReference type="EMBL" id="AC011620">
    <property type="protein sequence ID" value="AAF26127.1"/>
    <property type="status" value="ALT_SEQ"/>
    <property type="molecule type" value="Genomic_DNA"/>
</dbReference>
<dbReference type="EMBL" id="CP002686">
    <property type="protein sequence ID" value="AEE74281.1"/>
    <property type="molecule type" value="Genomic_DNA"/>
</dbReference>
<dbReference type="EMBL" id="BT004008">
    <property type="protein sequence ID" value="AAO42046.1"/>
    <property type="molecule type" value="mRNA"/>
</dbReference>
<dbReference type="EMBL" id="BT005154">
    <property type="protein sequence ID" value="AAO50687.1"/>
    <property type="molecule type" value="mRNA"/>
</dbReference>
<dbReference type="RefSeq" id="NP_187221.2">
    <property type="nucleotide sequence ID" value="NM_111444.5"/>
</dbReference>
<dbReference type="FunCoup" id="Q84J70">
    <property type="interactions" value="704"/>
</dbReference>
<dbReference type="STRING" id="3702.Q84J70"/>
<dbReference type="iPTMnet" id="Q84J70"/>
<dbReference type="PaxDb" id="3702-AT3G05700.1"/>
<dbReference type="ProteomicsDB" id="224162"/>
<dbReference type="EnsemblPlants" id="AT3G05700.1">
    <property type="protein sequence ID" value="AT3G05700.1"/>
    <property type="gene ID" value="AT3G05700"/>
</dbReference>
<dbReference type="GeneID" id="819739"/>
<dbReference type="Gramene" id="AT3G05700.1">
    <property type="protein sequence ID" value="AT3G05700.1"/>
    <property type="gene ID" value="AT3G05700"/>
</dbReference>
<dbReference type="KEGG" id="ath:AT3G05700"/>
<dbReference type="Araport" id="AT3G05700"/>
<dbReference type="TAIR" id="AT3G05700">
    <property type="gene designation" value="DIL9-3"/>
</dbReference>
<dbReference type="eggNOG" id="ENOG502QW9I">
    <property type="taxonomic scope" value="Eukaryota"/>
</dbReference>
<dbReference type="HOGENOM" id="CLU_072240_0_1_1"/>
<dbReference type="InParanoid" id="Q84J70"/>
<dbReference type="OMA" id="PLANEHT"/>
<dbReference type="PhylomeDB" id="Q84J70"/>
<dbReference type="PRO" id="PR:Q84J70"/>
<dbReference type="Proteomes" id="UP000006548">
    <property type="component" value="Chromosome 3"/>
</dbReference>
<dbReference type="ExpressionAtlas" id="Q84J70">
    <property type="expression patterns" value="baseline and differential"/>
</dbReference>
<dbReference type="GO" id="GO:0005634">
    <property type="term" value="C:nucleus"/>
    <property type="evidence" value="ECO:0000314"/>
    <property type="project" value="TAIR"/>
</dbReference>
<dbReference type="GO" id="GO:0003677">
    <property type="term" value="F:DNA binding"/>
    <property type="evidence" value="ECO:0000314"/>
    <property type="project" value="TAIR"/>
</dbReference>
<dbReference type="GO" id="GO:0045893">
    <property type="term" value="P:positive regulation of DNA-templated transcription"/>
    <property type="evidence" value="ECO:0000314"/>
    <property type="project" value="TAIR"/>
</dbReference>
<dbReference type="GO" id="GO:0009737">
    <property type="term" value="P:response to abscisic acid"/>
    <property type="evidence" value="ECO:0000315"/>
    <property type="project" value="TAIR"/>
</dbReference>
<dbReference type="GO" id="GO:0009651">
    <property type="term" value="P:response to salt stress"/>
    <property type="evidence" value="ECO:0000315"/>
    <property type="project" value="TAIR"/>
</dbReference>
<dbReference type="GO" id="GO:0009414">
    <property type="term" value="P:response to water deprivation"/>
    <property type="evidence" value="ECO:0000315"/>
    <property type="project" value="TAIR"/>
</dbReference>
<dbReference type="InterPro" id="IPR033347">
    <property type="entry name" value="DI19"/>
</dbReference>
<dbReference type="InterPro" id="IPR027935">
    <property type="entry name" value="Di19_C"/>
</dbReference>
<dbReference type="InterPro" id="IPR008598">
    <property type="entry name" value="Di19_Zn-bd"/>
</dbReference>
<dbReference type="PANTHER" id="PTHR31875">
    <property type="entry name" value="PROTEIN DEHYDRATION-INDUCED 19"/>
    <property type="match status" value="1"/>
</dbReference>
<dbReference type="PANTHER" id="PTHR31875:SF26">
    <property type="entry name" value="PROTEIN DEHYDRATION-INDUCED 19-RELATED"/>
    <property type="match status" value="1"/>
</dbReference>
<dbReference type="Pfam" id="PF14571">
    <property type="entry name" value="Di19_C"/>
    <property type="match status" value="1"/>
</dbReference>
<dbReference type="Pfam" id="PF05605">
    <property type="entry name" value="zf-Di19"/>
    <property type="match status" value="1"/>
</dbReference>
<proteinExistence type="evidence at protein level"/>
<accession>Q84J70</accession>
<accession>Q9M9X5</accession>